<name>PYRD_CHESB</name>
<evidence type="ECO:0000255" key="1">
    <source>
        <dbReference type="HAMAP-Rule" id="MF_00225"/>
    </source>
</evidence>
<dbReference type="EC" id="1.3.5.2" evidence="1"/>
<dbReference type="EMBL" id="CP000390">
    <property type="protein sequence ID" value="ABG61499.1"/>
    <property type="molecule type" value="Genomic_DNA"/>
</dbReference>
<dbReference type="SMR" id="Q11M76"/>
<dbReference type="STRING" id="266779.Meso_0094"/>
<dbReference type="KEGG" id="mes:Meso_0094"/>
<dbReference type="eggNOG" id="COG0167">
    <property type="taxonomic scope" value="Bacteria"/>
</dbReference>
<dbReference type="HOGENOM" id="CLU_013640_2_1_5"/>
<dbReference type="OrthoDB" id="9802377at2"/>
<dbReference type="UniPathway" id="UPA00070">
    <property type="reaction ID" value="UER00946"/>
</dbReference>
<dbReference type="GO" id="GO:0005737">
    <property type="term" value="C:cytoplasm"/>
    <property type="evidence" value="ECO:0007669"/>
    <property type="project" value="InterPro"/>
</dbReference>
<dbReference type="GO" id="GO:0005886">
    <property type="term" value="C:plasma membrane"/>
    <property type="evidence" value="ECO:0007669"/>
    <property type="project" value="UniProtKB-SubCell"/>
</dbReference>
<dbReference type="GO" id="GO:0106430">
    <property type="term" value="F:dihydroorotate dehydrogenase (quinone) activity"/>
    <property type="evidence" value="ECO:0007669"/>
    <property type="project" value="UniProtKB-EC"/>
</dbReference>
<dbReference type="GO" id="GO:0006207">
    <property type="term" value="P:'de novo' pyrimidine nucleobase biosynthetic process"/>
    <property type="evidence" value="ECO:0007669"/>
    <property type="project" value="InterPro"/>
</dbReference>
<dbReference type="GO" id="GO:0044205">
    <property type="term" value="P:'de novo' UMP biosynthetic process"/>
    <property type="evidence" value="ECO:0007669"/>
    <property type="project" value="UniProtKB-UniRule"/>
</dbReference>
<dbReference type="CDD" id="cd04738">
    <property type="entry name" value="DHOD_2_like"/>
    <property type="match status" value="1"/>
</dbReference>
<dbReference type="Gene3D" id="3.20.20.70">
    <property type="entry name" value="Aldolase class I"/>
    <property type="match status" value="1"/>
</dbReference>
<dbReference type="HAMAP" id="MF_00225">
    <property type="entry name" value="DHO_dh_type2"/>
    <property type="match status" value="1"/>
</dbReference>
<dbReference type="InterPro" id="IPR013785">
    <property type="entry name" value="Aldolase_TIM"/>
</dbReference>
<dbReference type="InterPro" id="IPR050074">
    <property type="entry name" value="DHO_dehydrogenase"/>
</dbReference>
<dbReference type="InterPro" id="IPR005719">
    <property type="entry name" value="Dihydroorotate_DH_2"/>
</dbReference>
<dbReference type="InterPro" id="IPR005720">
    <property type="entry name" value="Dihydroorotate_DH_cat"/>
</dbReference>
<dbReference type="InterPro" id="IPR001295">
    <property type="entry name" value="Dihydroorotate_DH_CS"/>
</dbReference>
<dbReference type="NCBIfam" id="NF003645">
    <property type="entry name" value="PRK05286.1-2"/>
    <property type="match status" value="1"/>
</dbReference>
<dbReference type="NCBIfam" id="NF003652">
    <property type="entry name" value="PRK05286.2-5"/>
    <property type="match status" value="1"/>
</dbReference>
<dbReference type="NCBIfam" id="TIGR01036">
    <property type="entry name" value="pyrD_sub2"/>
    <property type="match status" value="1"/>
</dbReference>
<dbReference type="PANTHER" id="PTHR48109:SF4">
    <property type="entry name" value="DIHYDROOROTATE DEHYDROGENASE (QUINONE), MITOCHONDRIAL"/>
    <property type="match status" value="1"/>
</dbReference>
<dbReference type="PANTHER" id="PTHR48109">
    <property type="entry name" value="DIHYDROOROTATE DEHYDROGENASE (QUINONE), MITOCHONDRIAL-RELATED"/>
    <property type="match status" value="1"/>
</dbReference>
<dbReference type="Pfam" id="PF01180">
    <property type="entry name" value="DHO_dh"/>
    <property type="match status" value="1"/>
</dbReference>
<dbReference type="SUPFAM" id="SSF51395">
    <property type="entry name" value="FMN-linked oxidoreductases"/>
    <property type="match status" value="1"/>
</dbReference>
<dbReference type="PROSITE" id="PS00911">
    <property type="entry name" value="DHODEHASE_1"/>
    <property type="match status" value="1"/>
</dbReference>
<dbReference type="PROSITE" id="PS00912">
    <property type="entry name" value="DHODEHASE_2"/>
    <property type="match status" value="1"/>
</dbReference>
<feature type="chain" id="PRO_1000024182" description="Dihydroorotate dehydrogenase (quinone)">
    <location>
        <begin position="1"/>
        <end position="363"/>
    </location>
</feature>
<feature type="active site" description="Nucleophile" evidence="1">
    <location>
        <position position="174"/>
    </location>
</feature>
<feature type="binding site" evidence="1">
    <location>
        <begin position="62"/>
        <end position="66"/>
    </location>
    <ligand>
        <name>FMN</name>
        <dbReference type="ChEBI" id="CHEBI:58210"/>
    </ligand>
</feature>
<feature type="binding site" evidence="1">
    <location>
        <position position="66"/>
    </location>
    <ligand>
        <name>substrate</name>
    </ligand>
</feature>
<feature type="binding site" evidence="1">
    <location>
        <position position="86"/>
    </location>
    <ligand>
        <name>FMN</name>
        <dbReference type="ChEBI" id="CHEBI:58210"/>
    </ligand>
</feature>
<feature type="binding site" evidence="1">
    <location>
        <begin position="111"/>
        <end position="115"/>
    </location>
    <ligand>
        <name>substrate</name>
    </ligand>
</feature>
<feature type="binding site" evidence="1">
    <location>
        <position position="140"/>
    </location>
    <ligand>
        <name>FMN</name>
        <dbReference type="ChEBI" id="CHEBI:58210"/>
    </ligand>
</feature>
<feature type="binding site" evidence="1">
    <location>
        <position position="171"/>
    </location>
    <ligand>
        <name>FMN</name>
        <dbReference type="ChEBI" id="CHEBI:58210"/>
    </ligand>
</feature>
<feature type="binding site" evidence="1">
    <location>
        <position position="171"/>
    </location>
    <ligand>
        <name>substrate</name>
    </ligand>
</feature>
<feature type="binding site" evidence="1">
    <location>
        <position position="176"/>
    </location>
    <ligand>
        <name>substrate</name>
    </ligand>
</feature>
<feature type="binding site" evidence="1">
    <location>
        <position position="216"/>
    </location>
    <ligand>
        <name>FMN</name>
        <dbReference type="ChEBI" id="CHEBI:58210"/>
    </ligand>
</feature>
<feature type="binding site" evidence="1">
    <location>
        <position position="244"/>
    </location>
    <ligand>
        <name>FMN</name>
        <dbReference type="ChEBI" id="CHEBI:58210"/>
    </ligand>
</feature>
<feature type="binding site" evidence="1">
    <location>
        <begin position="245"/>
        <end position="246"/>
    </location>
    <ligand>
        <name>substrate</name>
    </ligand>
</feature>
<feature type="binding site" evidence="1">
    <location>
        <position position="266"/>
    </location>
    <ligand>
        <name>FMN</name>
        <dbReference type="ChEBI" id="CHEBI:58210"/>
    </ligand>
</feature>
<feature type="binding site" evidence="1">
    <location>
        <position position="295"/>
    </location>
    <ligand>
        <name>FMN</name>
        <dbReference type="ChEBI" id="CHEBI:58210"/>
    </ligand>
</feature>
<feature type="binding site" evidence="1">
    <location>
        <begin position="316"/>
        <end position="317"/>
    </location>
    <ligand>
        <name>FMN</name>
        <dbReference type="ChEBI" id="CHEBI:58210"/>
    </ligand>
</feature>
<keyword id="KW-1003">Cell membrane</keyword>
<keyword id="KW-0285">Flavoprotein</keyword>
<keyword id="KW-0288">FMN</keyword>
<keyword id="KW-0472">Membrane</keyword>
<keyword id="KW-0560">Oxidoreductase</keyword>
<keyword id="KW-0665">Pyrimidine biosynthesis</keyword>
<gene>
    <name evidence="1" type="primary">pyrD</name>
    <name type="ordered locus">Meso_0094</name>
</gene>
<protein>
    <recommendedName>
        <fullName evidence="1">Dihydroorotate dehydrogenase (quinone)</fullName>
        <ecNumber evidence="1">1.3.5.2</ecNumber>
    </recommendedName>
    <alternativeName>
        <fullName evidence="1">DHOdehase</fullName>
        <shortName evidence="1">DHOD</shortName>
        <shortName evidence="1">DHODase</shortName>
    </alternativeName>
    <alternativeName>
        <fullName evidence="1">Dihydroorotate oxidase</fullName>
    </alternativeName>
</protein>
<proteinExistence type="inferred from homology"/>
<reference key="1">
    <citation type="submission" date="2006-06" db="EMBL/GenBank/DDBJ databases">
        <title>Complete sequence of chromosome of Mesorhizobium sp. BNC1.</title>
        <authorList>
            <consortium name="US DOE Joint Genome Institute"/>
            <person name="Copeland A."/>
            <person name="Lucas S."/>
            <person name="Lapidus A."/>
            <person name="Barry K."/>
            <person name="Detter J.C."/>
            <person name="Glavina del Rio T."/>
            <person name="Hammon N."/>
            <person name="Israni S."/>
            <person name="Dalin E."/>
            <person name="Tice H."/>
            <person name="Pitluck S."/>
            <person name="Chertkov O."/>
            <person name="Brettin T."/>
            <person name="Bruce D."/>
            <person name="Han C."/>
            <person name="Tapia R."/>
            <person name="Gilna P."/>
            <person name="Schmutz J."/>
            <person name="Larimer F."/>
            <person name="Land M."/>
            <person name="Hauser L."/>
            <person name="Kyrpides N."/>
            <person name="Mikhailova N."/>
            <person name="Richardson P."/>
        </authorList>
    </citation>
    <scope>NUCLEOTIDE SEQUENCE [LARGE SCALE GENOMIC DNA]</scope>
    <source>
        <strain>BNC1</strain>
    </source>
</reference>
<sequence>MMHIIDRLTRPVLFAFDPERAHELSIAALKTGIPFCSGGVQNSKLAVSVAGLNFPNPIGMAAGYDKNAEIPDALLNLGFGFAECGTVTPKPQEGNPRPRIFRLTRDRAVINRLGFNNEGHAQALARLSLRKGKSGIVGVNIGANRDSSDRMADYEEGVRTFAAVASYLTINISSPNTTGLRGLQDRENLSELLQRVMRVRNEQAALIKRKVPVFLKIAPDLSEEALADIAQEVLEKGLDGLIVSNTTLSREGVSAPAASETGGLSGEPLFERSTIVLAKMRRLVGPALPIIGVGGVHSAETALEKMRAGADLVQLYTGMVFAGPGLPARIVSRLAAYAEANGLNSIAEIRDSNIKPWADRPLA</sequence>
<organism>
    <name type="scientific">Chelativorans sp. (strain BNC1)</name>
    <dbReference type="NCBI Taxonomy" id="266779"/>
    <lineage>
        <taxon>Bacteria</taxon>
        <taxon>Pseudomonadati</taxon>
        <taxon>Pseudomonadota</taxon>
        <taxon>Alphaproteobacteria</taxon>
        <taxon>Hyphomicrobiales</taxon>
        <taxon>Phyllobacteriaceae</taxon>
        <taxon>Chelativorans</taxon>
    </lineage>
</organism>
<accession>Q11M76</accession>
<comment type="function">
    <text evidence="1">Catalyzes the conversion of dihydroorotate to orotate with quinone as electron acceptor.</text>
</comment>
<comment type="catalytic activity">
    <reaction evidence="1">
        <text>(S)-dihydroorotate + a quinone = orotate + a quinol</text>
        <dbReference type="Rhea" id="RHEA:30187"/>
        <dbReference type="ChEBI" id="CHEBI:24646"/>
        <dbReference type="ChEBI" id="CHEBI:30839"/>
        <dbReference type="ChEBI" id="CHEBI:30864"/>
        <dbReference type="ChEBI" id="CHEBI:132124"/>
        <dbReference type="EC" id="1.3.5.2"/>
    </reaction>
</comment>
<comment type="cofactor">
    <cofactor evidence="1">
        <name>FMN</name>
        <dbReference type="ChEBI" id="CHEBI:58210"/>
    </cofactor>
    <text evidence="1">Binds 1 FMN per subunit.</text>
</comment>
<comment type="pathway">
    <text evidence="1">Pyrimidine metabolism; UMP biosynthesis via de novo pathway; orotate from (S)-dihydroorotate (quinone route): step 1/1.</text>
</comment>
<comment type="subunit">
    <text evidence="1">Monomer.</text>
</comment>
<comment type="subcellular location">
    <subcellularLocation>
        <location evidence="1">Cell membrane</location>
        <topology evidence="1">Peripheral membrane protein</topology>
    </subcellularLocation>
</comment>
<comment type="similarity">
    <text evidence="1">Belongs to the dihydroorotate dehydrogenase family. Type 2 subfamily.</text>
</comment>